<reference key="1">
    <citation type="journal article" date="2010" name="Zoology">
        <title>Transcriptome analysis of the venom glands of the Chinese wolf spider Lycosa singoriensis.</title>
        <authorList>
            <person name="Zhang Y."/>
            <person name="Chen J."/>
            <person name="Tang X."/>
            <person name="Wang F."/>
            <person name="Jiang L."/>
            <person name="Xiong X."/>
            <person name="Wang M."/>
            <person name="Rong M."/>
            <person name="Liu Z."/>
            <person name="Liang S."/>
        </authorList>
    </citation>
    <scope>NUCLEOTIDE SEQUENCE [LARGE SCALE MRNA]</scope>
    <source>
        <tissue>Venom gland</tissue>
    </source>
</reference>
<sequence length="110" mass="12464">MKFVLLFGVLLVTLFSYSSAEMFDDFDQADEDELLSLIEKEEARKDCIPKHHECTNNKHGCCRGHLFKYKCQCTTVVTQSGEETERCFCGTPPHHKAAELVVGFGKKIFG</sequence>
<comment type="subcellular location">
    <subcellularLocation>
        <location evidence="1">Secreted</location>
    </subcellularLocation>
</comment>
<comment type="tissue specificity">
    <text>Expressed by the venom gland.</text>
</comment>
<comment type="domain">
    <text evidence="1">The presence of a 'disulfide through disulfide knot' structurally defines this protein as a knottin.</text>
</comment>
<comment type="similarity">
    <text evidence="3">Belongs to the neurotoxin 19 (CSTX) family. 03 subfamily.</text>
</comment>
<feature type="signal peptide" evidence="2">
    <location>
        <begin position="1"/>
        <end position="20"/>
    </location>
</feature>
<feature type="propeptide" id="PRO_0000401603" evidence="1">
    <location>
        <begin position="21"/>
        <end position="44"/>
    </location>
</feature>
<feature type="chain" id="PRO_0000401604" description="U1-lycotoxin-Ls1kk">
    <location>
        <begin position="45"/>
        <end position="110"/>
    </location>
</feature>
<feature type="disulfide bond" evidence="1">
    <location>
        <begin position="47"/>
        <end position="62"/>
    </location>
</feature>
<feature type="disulfide bond" evidence="1">
    <location>
        <begin position="54"/>
        <end position="71"/>
    </location>
</feature>
<feature type="disulfide bond" evidence="1">
    <location>
        <begin position="61"/>
        <end position="89"/>
    </location>
</feature>
<feature type="disulfide bond" evidence="1">
    <location>
        <begin position="73"/>
        <end position="87"/>
    </location>
</feature>
<protein>
    <recommendedName>
        <fullName>U1-lycotoxin-Ls1kk</fullName>
    </recommendedName>
    <alternativeName>
        <fullName>Toxin-like structure LSTX-A54</fullName>
    </alternativeName>
</protein>
<proteinExistence type="evidence at transcript level"/>
<organism>
    <name type="scientific">Lycosa singoriensis</name>
    <name type="common">Wolf spider</name>
    <name type="synonym">Aranea singoriensis</name>
    <dbReference type="NCBI Taxonomy" id="434756"/>
    <lineage>
        <taxon>Eukaryota</taxon>
        <taxon>Metazoa</taxon>
        <taxon>Ecdysozoa</taxon>
        <taxon>Arthropoda</taxon>
        <taxon>Chelicerata</taxon>
        <taxon>Arachnida</taxon>
        <taxon>Araneae</taxon>
        <taxon>Araneomorphae</taxon>
        <taxon>Entelegynae</taxon>
        <taxon>Lycosoidea</taxon>
        <taxon>Lycosidae</taxon>
        <taxon>Lycosa</taxon>
    </lineage>
</organism>
<dbReference type="EMBL" id="EU925977">
    <property type="protein sequence ID" value="ACI41309.1"/>
    <property type="molecule type" value="mRNA"/>
</dbReference>
<dbReference type="EMBL" id="FM863981">
    <property type="protein sequence ID" value="CAS03579.1"/>
    <property type="molecule type" value="mRNA"/>
</dbReference>
<dbReference type="SMR" id="B6DCP3"/>
<dbReference type="ArachnoServer" id="AS000925">
    <property type="toxin name" value="U1-lycotoxin-Ls1kk"/>
</dbReference>
<dbReference type="GO" id="GO:0005576">
    <property type="term" value="C:extracellular region"/>
    <property type="evidence" value="ECO:0007669"/>
    <property type="project" value="UniProtKB-SubCell"/>
</dbReference>
<dbReference type="GO" id="GO:0090729">
    <property type="term" value="F:toxin activity"/>
    <property type="evidence" value="ECO:0007669"/>
    <property type="project" value="UniProtKB-KW"/>
</dbReference>
<dbReference type="InterPro" id="IPR019553">
    <property type="entry name" value="Spider_toxin_CSTX_knottin"/>
</dbReference>
<dbReference type="InterPro" id="IPR011142">
    <property type="entry name" value="Spider_toxin_CSTX_Knottin_CS"/>
</dbReference>
<dbReference type="Pfam" id="PF10530">
    <property type="entry name" value="Toxin_35"/>
    <property type="match status" value="1"/>
</dbReference>
<dbReference type="PROSITE" id="PS60029">
    <property type="entry name" value="SPIDER_CSTX"/>
    <property type="match status" value="1"/>
</dbReference>
<accession>B6DCP3</accession>
<evidence type="ECO:0000250" key="1"/>
<evidence type="ECO:0000255" key="2"/>
<evidence type="ECO:0000305" key="3"/>
<name>TX154_LYCSI</name>
<keyword id="KW-1015">Disulfide bond</keyword>
<keyword id="KW-0960">Knottin</keyword>
<keyword id="KW-0964">Secreted</keyword>
<keyword id="KW-0732">Signal</keyword>
<keyword id="KW-0800">Toxin</keyword>